<organism>
    <name type="scientific">Clostridium novyi (strain NT)</name>
    <dbReference type="NCBI Taxonomy" id="386415"/>
    <lineage>
        <taxon>Bacteria</taxon>
        <taxon>Bacillati</taxon>
        <taxon>Bacillota</taxon>
        <taxon>Clostridia</taxon>
        <taxon>Eubacteriales</taxon>
        <taxon>Clostridiaceae</taxon>
        <taxon>Clostridium</taxon>
    </lineage>
</organism>
<accession>A0Q3U6</accession>
<comment type="function">
    <text evidence="1">Plays an essential role in the initiation and regulation of chromosomal replication. ATP-DnaA binds to the origin of replication (oriC) to initiate formation of the DNA replication initiation complex once per cell cycle. Binds the DnaA box (a 9 base pair repeat at the origin) and separates the double-stranded (ds)DNA. Forms a right-handed helical filament on oriC DNA; dsDNA binds to the exterior of the filament while single-stranded (ss)DNA is stabiized in the filament's interior. The ATP-DnaA-oriC complex binds and stabilizes one strand of the AT-rich DNA unwinding element (DUE), permitting loading of DNA polymerase. After initiation quickly degrades to an ADP-DnaA complex that is not apt for DNA replication. Binds acidic phospholipids.</text>
</comment>
<comment type="subunit">
    <text evidence="1">Oligomerizes as a right-handed, spiral filament on DNA at oriC.</text>
</comment>
<comment type="subcellular location">
    <subcellularLocation>
        <location evidence="1">Cytoplasm</location>
    </subcellularLocation>
</comment>
<comment type="domain">
    <text evidence="1">Domain I is involved in oligomerization and binding regulators, domain II is flexibile and of varying length in different bacteria, domain III forms the AAA+ region, while domain IV binds dsDNA.</text>
</comment>
<comment type="similarity">
    <text evidence="1">Belongs to the DnaA family.</text>
</comment>
<sequence length="448" mass="51301">MNAQLKQLWTKTLNIIKGELTEVSFNTWIKSISPISMNENTIKLEVPNDFTRGILESRYKDLIINAIKLITSKKYNIEFSITSEEIFNNQQLKPKSSNDNIVVNDEMTSILNPKYTFDSFVIGNSNRFAHAASLAVAESPAKAYNPLFIYGGVGLGKTHLMHAIGHYILQNTPNAKVVYVSSEKFTNELINSIKDDKNEEFRNKYRNVDVLLIDDIQFIAGKERTQEEFFHTFNALYEADKQIILSSDRPPKEIPTLEDRLRSRFEWGLIADIQAPDFETRIAILKKKADVENLDIPNEVMVYIATKIKSNIRELEGALIRIVAYSSLTNREISVDLAAEALKDIISSEQNKQITIELIQDIVCNYFNLKIQELKSSRRTRNIAFPRQIAMYLSRKLTDMSLPKIGEEFGGRDHTTVIHAYEKISNILKKDESLRNVIDDLNKKITNN</sequence>
<name>DNAA_CLONN</name>
<proteinExistence type="inferred from homology"/>
<reference key="1">
    <citation type="journal article" date="2006" name="Nat. Biotechnol.">
        <title>The genome and transcriptomes of the anti-tumor agent Clostridium novyi-NT.</title>
        <authorList>
            <person name="Bettegowda C."/>
            <person name="Huang X."/>
            <person name="Lin J."/>
            <person name="Cheong I."/>
            <person name="Kohli M."/>
            <person name="Szabo S.A."/>
            <person name="Zhang X."/>
            <person name="Diaz L.A. Jr."/>
            <person name="Velculescu V.E."/>
            <person name="Parmigiani G."/>
            <person name="Kinzler K.W."/>
            <person name="Vogelstein B."/>
            <person name="Zhou S."/>
        </authorList>
    </citation>
    <scope>NUCLEOTIDE SEQUENCE [LARGE SCALE GENOMIC DNA]</scope>
    <source>
        <strain>NT</strain>
    </source>
</reference>
<keyword id="KW-0067">ATP-binding</keyword>
<keyword id="KW-0963">Cytoplasm</keyword>
<keyword id="KW-0235">DNA replication</keyword>
<keyword id="KW-0238">DNA-binding</keyword>
<keyword id="KW-0446">Lipid-binding</keyword>
<keyword id="KW-0547">Nucleotide-binding</keyword>
<keyword id="KW-1185">Reference proteome</keyword>
<feature type="chain" id="PRO_1000048635" description="Chromosomal replication initiator protein DnaA">
    <location>
        <begin position="1"/>
        <end position="448"/>
    </location>
</feature>
<feature type="region of interest" description="Domain I, interacts with DnaA modulators" evidence="1">
    <location>
        <begin position="1"/>
        <end position="73"/>
    </location>
</feature>
<feature type="region of interest" description="Domain II" evidence="1">
    <location>
        <begin position="73"/>
        <end position="109"/>
    </location>
</feature>
<feature type="region of interest" description="Domain III, AAA+ region" evidence="1">
    <location>
        <begin position="110"/>
        <end position="326"/>
    </location>
</feature>
<feature type="region of interest" description="Domain IV, binds dsDNA" evidence="1">
    <location>
        <begin position="327"/>
        <end position="448"/>
    </location>
</feature>
<feature type="binding site" evidence="1">
    <location>
        <position position="154"/>
    </location>
    <ligand>
        <name>ATP</name>
        <dbReference type="ChEBI" id="CHEBI:30616"/>
    </ligand>
</feature>
<feature type="binding site" evidence="1">
    <location>
        <position position="156"/>
    </location>
    <ligand>
        <name>ATP</name>
        <dbReference type="ChEBI" id="CHEBI:30616"/>
    </ligand>
</feature>
<feature type="binding site" evidence="1">
    <location>
        <position position="157"/>
    </location>
    <ligand>
        <name>ATP</name>
        <dbReference type="ChEBI" id="CHEBI:30616"/>
    </ligand>
</feature>
<feature type="binding site" evidence="1">
    <location>
        <position position="158"/>
    </location>
    <ligand>
        <name>ATP</name>
        <dbReference type="ChEBI" id="CHEBI:30616"/>
    </ligand>
</feature>
<protein>
    <recommendedName>
        <fullName evidence="1">Chromosomal replication initiator protein DnaA</fullName>
    </recommendedName>
</protein>
<gene>
    <name evidence="1" type="primary">dnaA</name>
    <name type="ordered locus">NT01CX_0867</name>
</gene>
<dbReference type="EMBL" id="CP000382">
    <property type="protein sequence ID" value="ABK62135.1"/>
    <property type="molecule type" value="Genomic_DNA"/>
</dbReference>
<dbReference type="RefSeq" id="WP_011723269.1">
    <property type="nucleotide sequence ID" value="NC_008593.1"/>
</dbReference>
<dbReference type="SMR" id="A0Q3U6"/>
<dbReference type="STRING" id="386415.NT01CX_0867"/>
<dbReference type="KEGG" id="cno:NT01CX_0867"/>
<dbReference type="eggNOG" id="COG0593">
    <property type="taxonomic scope" value="Bacteria"/>
</dbReference>
<dbReference type="HOGENOM" id="CLU_026910_3_1_9"/>
<dbReference type="Proteomes" id="UP000008220">
    <property type="component" value="Chromosome"/>
</dbReference>
<dbReference type="GO" id="GO:0005737">
    <property type="term" value="C:cytoplasm"/>
    <property type="evidence" value="ECO:0007669"/>
    <property type="project" value="UniProtKB-SubCell"/>
</dbReference>
<dbReference type="GO" id="GO:0005886">
    <property type="term" value="C:plasma membrane"/>
    <property type="evidence" value="ECO:0007669"/>
    <property type="project" value="TreeGrafter"/>
</dbReference>
<dbReference type="GO" id="GO:0005524">
    <property type="term" value="F:ATP binding"/>
    <property type="evidence" value="ECO:0007669"/>
    <property type="project" value="UniProtKB-UniRule"/>
</dbReference>
<dbReference type="GO" id="GO:0016887">
    <property type="term" value="F:ATP hydrolysis activity"/>
    <property type="evidence" value="ECO:0007669"/>
    <property type="project" value="InterPro"/>
</dbReference>
<dbReference type="GO" id="GO:0003688">
    <property type="term" value="F:DNA replication origin binding"/>
    <property type="evidence" value="ECO:0007669"/>
    <property type="project" value="UniProtKB-UniRule"/>
</dbReference>
<dbReference type="GO" id="GO:0008289">
    <property type="term" value="F:lipid binding"/>
    <property type="evidence" value="ECO:0007669"/>
    <property type="project" value="UniProtKB-KW"/>
</dbReference>
<dbReference type="GO" id="GO:0006270">
    <property type="term" value="P:DNA replication initiation"/>
    <property type="evidence" value="ECO:0007669"/>
    <property type="project" value="UniProtKB-UniRule"/>
</dbReference>
<dbReference type="GO" id="GO:0006275">
    <property type="term" value="P:regulation of DNA replication"/>
    <property type="evidence" value="ECO:0007669"/>
    <property type="project" value="UniProtKB-UniRule"/>
</dbReference>
<dbReference type="CDD" id="cd00009">
    <property type="entry name" value="AAA"/>
    <property type="match status" value="1"/>
</dbReference>
<dbReference type="CDD" id="cd06571">
    <property type="entry name" value="Bac_DnaA_C"/>
    <property type="match status" value="1"/>
</dbReference>
<dbReference type="FunFam" id="1.10.1750.10:FF:000003">
    <property type="entry name" value="Chromosomal replication initiator protein DnaA"/>
    <property type="match status" value="1"/>
</dbReference>
<dbReference type="FunFam" id="1.10.8.60:FF:000003">
    <property type="entry name" value="Chromosomal replication initiator protein DnaA"/>
    <property type="match status" value="1"/>
</dbReference>
<dbReference type="FunFam" id="3.40.50.300:FF:000150">
    <property type="entry name" value="Chromosomal replication initiator protein DnaA"/>
    <property type="match status" value="1"/>
</dbReference>
<dbReference type="Gene3D" id="1.10.1750.10">
    <property type="match status" value="1"/>
</dbReference>
<dbReference type="Gene3D" id="1.10.8.60">
    <property type="match status" value="1"/>
</dbReference>
<dbReference type="Gene3D" id="3.30.300.180">
    <property type="match status" value="1"/>
</dbReference>
<dbReference type="Gene3D" id="3.40.50.300">
    <property type="entry name" value="P-loop containing nucleotide triphosphate hydrolases"/>
    <property type="match status" value="1"/>
</dbReference>
<dbReference type="HAMAP" id="MF_00377">
    <property type="entry name" value="DnaA_bact"/>
    <property type="match status" value="1"/>
</dbReference>
<dbReference type="InterPro" id="IPR003593">
    <property type="entry name" value="AAA+_ATPase"/>
</dbReference>
<dbReference type="InterPro" id="IPR001957">
    <property type="entry name" value="Chromosome_initiator_DnaA"/>
</dbReference>
<dbReference type="InterPro" id="IPR020591">
    <property type="entry name" value="Chromosome_initiator_DnaA-like"/>
</dbReference>
<dbReference type="InterPro" id="IPR018312">
    <property type="entry name" value="Chromosome_initiator_DnaA_CS"/>
</dbReference>
<dbReference type="InterPro" id="IPR013159">
    <property type="entry name" value="DnaA_C"/>
</dbReference>
<dbReference type="InterPro" id="IPR013317">
    <property type="entry name" value="DnaA_dom"/>
</dbReference>
<dbReference type="InterPro" id="IPR024633">
    <property type="entry name" value="DnaA_N_dom"/>
</dbReference>
<dbReference type="InterPro" id="IPR038454">
    <property type="entry name" value="DnaA_N_sf"/>
</dbReference>
<dbReference type="InterPro" id="IPR027417">
    <property type="entry name" value="P-loop_NTPase"/>
</dbReference>
<dbReference type="InterPro" id="IPR010921">
    <property type="entry name" value="Trp_repressor/repl_initiator"/>
</dbReference>
<dbReference type="NCBIfam" id="TIGR00362">
    <property type="entry name" value="DnaA"/>
    <property type="match status" value="1"/>
</dbReference>
<dbReference type="NCBIfam" id="NF010686">
    <property type="entry name" value="PRK14086.1"/>
    <property type="match status" value="1"/>
</dbReference>
<dbReference type="PANTHER" id="PTHR30050">
    <property type="entry name" value="CHROMOSOMAL REPLICATION INITIATOR PROTEIN DNAA"/>
    <property type="match status" value="1"/>
</dbReference>
<dbReference type="PANTHER" id="PTHR30050:SF2">
    <property type="entry name" value="CHROMOSOMAL REPLICATION INITIATOR PROTEIN DNAA"/>
    <property type="match status" value="1"/>
</dbReference>
<dbReference type="Pfam" id="PF00308">
    <property type="entry name" value="Bac_DnaA"/>
    <property type="match status" value="1"/>
</dbReference>
<dbReference type="Pfam" id="PF08299">
    <property type="entry name" value="Bac_DnaA_C"/>
    <property type="match status" value="1"/>
</dbReference>
<dbReference type="Pfam" id="PF11638">
    <property type="entry name" value="DnaA_N"/>
    <property type="match status" value="1"/>
</dbReference>
<dbReference type="PRINTS" id="PR00051">
    <property type="entry name" value="DNAA"/>
</dbReference>
<dbReference type="SMART" id="SM00382">
    <property type="entry name" value="AAA"/>
    <property type="match status" value="1"/>
</dbReference>
<dbReference type="SMART" id="SM00760">
    <property type="entry name" value="Bac_DnaA_C"/>
    <property type="match status" value="1"/>
</dbReference>
<dbReference type="SUPFAM" id="SSF52540">
    <property type="entry name" value="P-loop containing nucleoside triphosphate hydrolases"/>
    <property type="match status" value="1"/>
</dbReference>
<dbReference type="SUPFAM" id="SSF48295">
    <property type="entry name" value="TrpR-like"/>
    <property type="match status" value="1"/>
</dbReference>
<dbReference type="PROSITE" id="PS01008">
    <property type="entry name" value="DNAA"/>
    <property type="match status" value="1"/>
</dbReference>
<evidence type="ECO:0000255" key="1">
    <source>
        <dbReference type="HAMAP-Rule" id="MF_00377"/>
    </source>
</evidence>